<sequence length="834" mass="95305">MKLFQKIFGSYSQREVKRIMPIVDKIDALDSKVQALSNEQLRNKTDEFKERLDKGESLDSILPEAFAVVREVGFRTVGLKQYREQLIGGIVIHQGRIAEMKTGEGKTLVATAPAYLNALTGKGVHIVTVNDYLAKRDRDTMAPIYEALGLKVGVILHDMSQSQRQEAYNCDITYGTNSEFGFDYLRDNMVIYKEERVQRKLNFAIVDEVDSILIDEARTPLIISGEGEKSTEFYNIANGFAKSLEKEDYKVDEKANAVMLNDTGIKKAETFFSLENYADPENMEIQHYVVQALKANYIMKRDKDYMVKNGEVLIVDEFTGRMMEGRRYSDGLHQAIEAKEGVKVERESKTLATITYQNYFRIFNKLSGMTGTAQTEENEFRHIYGLDVIVVPTHKPIAREDFPDVVYKSAKGKFKAIADEIYETYKKGQPALVGTVSIEKSELLSDMLKRKGVPHQVLNAKFHEKEADIISYAGQKGTVTIATNMAGRGTDIKLGKGVVALGGLKIIGTERHESRRIDNQLRGRSGRQGDPGMSRFYVSLEDDLMRIFGSDRLQGIVEKLGLKDDEAIESKMVSNAIENAQKKVEGNNFDIRKTLLQYDDVINKQREIIYKQRSQVLEGEDLKNDVQDMIKSLINSIVDSHISGIEEEFEDEIVKLIEYMEDVYVPKDSVKKEDIINLSNEAIKDKFIDIAQKIYEQKEIEFTSEQMREIERVILLRVVDTRWMDHIDDMEHLKRAIGLRAYRQQEPAQAYQFEGSEMFEEMIYNIKLDTVKYLMHVQIERAPERERVVKNVITNQESDSIKKTPVKREKTVGRNDLCPCGSGKKYKNCCGRTV</sequence>
<comment type="function">
    <text evidence="1">Part of the Sec protein translocase complex. Interacts with the SecYEG preprotein conducting channel. Has a central role in coupling the hydrolysis of ATP to the transfer of proteins into and across the cell membrane, serving as an ATP-driven molecular motor driving the stepwise translocation of polypeptide chains across the membrane.</text>
</comment>
<comment type="catalytic activity">
    <reaction evidence="1">
        <text>ATP + H2O + cellular proteinSide 1 = ADP + phosphate + cellular proteinSide 2.</text>
        <dbReference type="EC" id="7.4.2.8"/>
    </reaction>
</comment>
<comment type="cofactor">
    <cofactor evidence="1">
        <name>Zn(2+)</name>
        <dbReference type="ChEBI" id="CHEBI:29105"/>
    </cofactor>
    <text evidence="1">May bind 1 zinc ion per subunit.</text>
</comment>
<comment type="subunit">
    <text evidence="1">Monomer and homodimer. Part of the essential Sec protein translocation apparatus which comprises SecA, SecYEG and auxiliary proteins SecDF. Other proteins may also be involved.</text>
</comment>
<comment type="subcellular location">
    <subcellularLocation>
        <location evidence="1">Cell membrane</location>
        <topology evidence="1">Peripheral membrane protein</topology>
        <orientation evidence="1">Cytoplasmic side</orientation>
    </subcellularLocation>
    <subcellularLocation>
        <location evidence="1">Cytoplasm</location>
    </subcellularLocation>
    <text evidence="1">Distribution is 50-50.</text>
</comment>
<comment type="similarity">
    <text evidence="1">Belongs to the SecA family.</text>
</comment>
<evidence type="ECO:0000255" key="1">
    <source>
        <dbReference type="HAMAP-Rule" id="MF_01382"/>
    </source>
</evidence>
<keyword id="KW-0067">ATP-binding</keyword>
<keyword id="KW-1003">Cell membrane</keyword>
<keyword id="KW-0963">Cytoplasm</keyword>
<keyword id="KW-0472">Membrane</keyword>
<keyword id="KW-0479">Metal-binding</keyword>
<keyword id="KW-0547">Nucleotide-binding</keyword>
<keyword id="KW-0653">Protein transport</keyword>
<keyword id="KW-1185">Reference proteome</keyword>
<keyword id="KW-1278">Translocase</keyword>
<keyword id="KW-0811">Translocation</keyword>
<keyword id="KW-0813">Transport</keyword>
<keyword id="KW-0862">Zinc</keyword>
<name>SECA_CLOK5</name>
<proteinExistence type="inferred from homology"/>
<feature type="chain" id="PRO_1000087312" description="Protein translocase subunit SecA">
    <location>
        <begin position="1"/>
        <end position="834"/>
    </location>
</feature>
<feature type="binding site" evidence="1">
    <location>
        <position position="85"/>
    </location>
    <ligand>
        <name>ATP</name>
        <dbReference type="ChEBI" id="CHEBI:30616"/>
    </ligand>
</feature>
<feature type="binding site" evidence="1">
    <location>
        <begin position="103"/>
        <end position="107"/>
    </location>
    <ligand>
        <name>ATP</name>
        <dbReference type="ChEBI" id="CHEBI:30616"/>
    </ligand>
</feature>
<feature type="binding site" evidence="1">
    <location>
        <position position="491"/>
    </location>
    <ligand>
        <name>ATP</name>
        <dbReference type="ChEBI" id="CHEBI:30616"/>
    </ligand>
</feature>
<feature type="binding site" evidence="1">
    <location>
        <position position="818"/>
    </location>
    <ligand>
        <name>Zn(2+)</name>
        <dbReference type="ChEBI" id="CHEBI:29105"/>
    </ligand>
</feature>
<feature type="binding site" evidence="1">
    <location>
        <position position="820"/>
    </location>
    <ligand>
        <name>Zn(2+)</name>
        <dbReference type="ChEBI" id="CHEBI:29105"/>
    </ligand>
</feature>
<feature type="binding site" evidence="1">
    <location>
        <position position="829"/>
    </location>
    <ligand>
        <name>Zn(2+)</name>
        <dbReference type="ChEBI" id="CHEBI:29105"/>
    </ligand>
</feature>
<feature type="binding site" evidence="1">
    <location>
        <position position="830"/>
    </location>
    <ligand>
        <name>Zn(2+)</name>
        <dbReference type="ChEBI" id="CHEBI:29105"/>
    </ligand>
</feature>
<dbReference type="EC" id="7.4.2.8" evidence="1"/>
<dbReference type="EMBL" id="CP000673">
    <property type="protein sequence ID" value="EDK35608.1"/>
    <property type="molecule type" value="Genomic_DNA"/>
</dbReference>
<dbReference type="RefSeq" id="WP_012103940.1">
    <property type="nucleotide sequence ID" value="NC_009706.1"/>
</dbReference>
<dbReference type="SMR" id="A5N3B2"/>
<dbReference type="STRING" id="431943.CKL_3618"/>
<dbReference type="KEGG" id="ckl:CKL_3618"/>
<dbReference type="eggNOG" id="COG0653">
    <property type="taxonomic scope" value="Bacteria"/>
</dbReference>
<dbReference type="HOGENOM" id="CLU_005314_3_0_9"/>
<dbReference type="Proteomes" id="UP000002411">
    <property type="component" value="Chromosome"/>
</dbReference>
<dbReference type="GO" id="GO:0031522">
    <property type="term" value="C:cell envelope Sec protein transport complex"/>
    <property type="evidence" value="ECO:0007669"/>
    <property type="project" value="TreeGrafter"/>
</dbReference>
<dbReference type="GO" id="GO:0005829">
    <property type="term" value="C:cytosol"/>
    <property type="evidence" value="ECO:0007669"/>
    <property type="project" value="TreeGrafter"/>
</dbReference>
<dbReference type="GO" id="GO:0005886">
    <property type="term" value="C:plasma membrane"/>
    <property type="evidence" value="ECO:0007669"/>
    <property type="project" value="UniProtKB-SubCell"/>
</dbReference>
<dbReference type="GO" id="GO:0005524">
    <property type="term" value="F:ATP binding"/>
    <property type="evidence" value="ECO:0007669"/>
    <property type="project" value="UniProtKB-UniRule"/>
</dbReference>
<dbReference type="GO" id="GO:0046872">
    <property type="term" value="F:metal ion binding"/>
    <property type="evidence" value="ECO:0007669"/>
    <property type="project" value="UniProtKB-KW"/>
</dbReference>
<dbReference type="GO" id="GO:0008564">
    <property type="term" value="F:protein-exporting ATPase activity"/>
    <property type="evidence" value="ECO:0007669"/>
    <property type="project" value="UniProtKB-EC"/>
</dbReference>
<dbReference type="GO" id="GO:0065002">
    <property type="term" value="P:intracellular protein transmembrane transport"/>
    <property type="evidence" value="ECO:0007669"/>
    <property type="project" value="UniProtKB-UniRule"/>
</dbReference>
<dbReference type="GO" id="GO:0017038">
    <property type="term" value="P:protein import"/>
    <property type="evidence" value="ECO:0007669"/>
    <property type="project" value="InterPro"/>
</dbReference>
<dbReference type="GO" id="GO:0006605">
    <property type="term" value="P:protein targeting"/>
    <property type="evidence" value="ECO:0007669"/>
    <property type="project" value="UniProtKB-UniRule"/>
</dbReference>
<dbReference type="GO" id="GO:0043952">
    <property type="term" value="P:protein transport by the Sec complex"/>
    <property type="evidence" value="ECO:0007669"/>
    <property type="project" value="TreeGrafter"/>
</dbReference>
<dbReference type="CDD" id="cd17928">
    <property type="entry name" value="DEXDc_SecA"/>
    <property type="match status" value="1"/>
</dbReference>
<dbReference type="CDD" id="cd18803">
    <property type="entry name" value="SF2_C_secA"/>
    <property type="match status" value="1"/>
</dbReference>
<dbReference type="FunFam" id="1.10.3060.10:FF:000002">
    <property type="entry name" value="Preprotein translocase subunit SecA"/>
    <property type="match status" value="1"/>
</dbReference>
<dbReference type="FunFam" id="3.40.50.300:FF:000429">
    <property type="entry name" value="Preprotein translocase subunit SecA"/>
    <property type="match status" value="1"/>
</dbReference>
<dbReference type="FunFam" id="3.90.1440.10:FF:000001">
    <property type="entry name" value="Preprotein translocase subunit SecA"/>
    <property type="match status" value="1"/>
</dbReference>
<dbReference type="Gene3D" id="1.10.3060.10">
    <property type="entry name" value="Helical scaffold and wing domains of SecA"/>
    <property type="match status" value="1"/>
</dbReference>
<dbReference type="Gene3D" id="3.40.50.300">
    <property type="entry name" value="P-loop containing nucleotide triphosphate hydrolases"/>
    <property type="match status" value="3"/>
</dbReference>
<dbReference type="Gene3D" id="3.90.1440.10">
    <property type="entry name" value="SecA, preprotein cross-linking domain"/>
    <property type="match status" value="1"/>
</dbReference>
<dbReference type="HAMAP" id="MF_01382">
    <property type="entry name" value="SecA"/>
    <property type="match status" value="1"/>
</dbReference>
<dbReference type="InterPro" id="IPR014001">
    <property type="entry name" value="Helicase_ATP-bd"/>
</dbReference>
<dbReference type="InterPro" id="IPR001650">
    <property type="entry name" value="Helicase_C-like"/>
</dbReference>
<dbReference type="InterPro" id="IPR027417">
    <property type="entry name" value="P-loop_NTPase"/>
</dbReference>
<dbReference type="InterPro" id="IPR004027">
    <property type="entry name" value="SEC_C_motif"/>
</dbReference>
<dbReference type="InterPro" id="IPR000185">
    <property type="entry name" value="SecA"/>
</dbReference>
<dbReference type="InterPro" id="IPR020937">
    <property type="entry name" value="SecA_CS"/>
</dbReference>
<dbReference type="InterPro" id="IPR011115">
    <property type="entry name" value="SecA_DEAD"/>
</dbReference>
<dbReference type="InterPro" id="IPR014018">
    <property type="entry name" value="SecA_motor_DEAD"/>
</dbReference>
<dbReference type="InterPro" id="IPR011130">
    <property type="entry name" value="SecA_preprotein_X-link_dom"/>
</dbReference>
<dbReference type="InterPro" id="IPR044722">
    <property type="entry name" value="SecA_SF2_C"/>
</dbReference>
<dbReference type="InterPro" id="IPR011116">
    <property type="entry name" value="SecA_Wing/Scaffold"/>
</dbReference>
<dbReference type="InterPro" id="IPR036266">
    <property type="entry name" value="SecA_Wing/Scaffold_sf"/>
</dbReference>
<dbReference type="InterPro" id="IPR036670">
    <property type="entry name" value="SecA_X-link_sf"/>
</dbReference>
<dbReference type="NCBIfam" id="NF006630">
    <property type="entry name" value="PRK09200.1"/>
    <property type="match status" value="1"/>
</dbReference>
<dbReference type="NCBIfam" id="NF009538">
    <property type="entry name" value="PRK12904.1"/>
    <property type="match status" value="1"/>
</dbReference>
<dbReference type="NCBIfam" id="TIGR00963">
    <property type="entry name" value="secA"/>
    <property type="match status" value="1"/>
</dbReference>
<dbReference type="PANTHER" id="PTHR30612:SF0">
    <property type="entry name" value="CHLOROPLAST PROTEIN-TRANSPORTING ATPASE"/>
    <property type="match status" value="1"/>
</dbReference>
<dbReference type="PANTHER" id="PTHR30612">
    <property type="entry name" value="SECA INNER MEMBRANE COMPONENT OF SEC PROTEIN SECRETION SYSTEM"/>
    <property type="match status" value="1"/>
</dbReference>
<dbReference type="Pfam" id="PF21090">
    <property type="entry name" value="P-loop_SecA"/>
    <property type="match status" value="2"/>
</dbReference>
<dbReference type="Pfam" id="PF02810">
    <property type="entry name" value="SEC-C"/>
    <property type="match status" value="1"/>
</dbReference>
<dbReference type="Pfam" id="PF07517">
    <property type="entry name" value="SecA_DEAD"/>
    <property type="match status" value="1"/>
</dbReference>
<dbReference type="Pfam" id="PF01043">
    <property type="entry name" value="SecA_PP_bind"/>
    <property type="match status" value="1"/>
</dbReference>
<dbReference type="Pfam" id="PF07516">
    <property type="entry name" value="SecA_SW"/>
    <property type="match status" value="1"/>
</dbReference>
<dbReference type="PRINTS" id="PR00906">
    <property type="entry name" value="SECA"/>
</dbReference>
<dbReference type="SMART" id="SM00957">
    <property type="entry name" value="SecA_DEAD"/>
    <property type="match status" value="1"/>
</dbReference>
<dbReference type="SMART" id="SM00958">
    <property type="entry name" value="SecA_PP_bind"/>
    <property type="match status" value="1"/>
</dbReference>
<dbReference type="SUPFAM" id="SSF81886">
    <property type="entry name" value="Helical scaffold and wing domains of SecA"/>
    <property type="match status" value="1"/>
</dbReference>
<dbReference type="SUPFAM" id="SSF52540">
    <property type="entry name" value="P-loop containing nucleoside triphosphate hydrolases"/>
    <property type="match status" value="2"/>
</dbReference>
<dbReference type="SUPFAM" id="SSF81767">
    <property type="entry name" value="Pre-protein crosslinking domain of SecA"/>
    <property type="match status" value="1"/>
</dbReference>
<dbReference type="PROSITE" id="PS01312">
    <property type="entry name" value="SECA"/>
    <property type="match status" value="1"/>
</dbReference>
<dbReference type="PROSITE" id="PS51196">
    <property type="entry name" value="SECA_MOTOR_DEAD"/>
    <property type="match status" value="1"/>
</dbReference>
<gene>
    <name evidence="1" type="primary">secA</name>
    <name type="ordered locus">CKL_3618</name>
</gene>
<protein>
    <recommendedName>
        <fullName evidence="1">Protein translocase subunit SecA</fullName>
        <ecNumber evidence="1">7.4.2.8</ecNumber>
    </recommendedName>
</protein>
<reference key="1">
    <citation type="journal article" date="2008" name="Proc. Natl. Acad. Sci. U.S.A.">
        <title>The genome of Clostridium kluyveri, a strict anaerobe with unique metabolic features.</title>
        <authorList>
            <person name="Seedorf H."/>
            <person name="Fricke W.F."/>
            <person name="Veith B."/>
            <person name="Brueggemann H."/>
            <person name="Liesegang H."/>
            <person name="Strittmatter A."/>
            <person name="Miethke M."/>
            <person name="Buckel W."/>
            <person name="Hinderberger J."/>
            <person name="Li F."/>
            <person name="Hagemeier C."/>
            <person name="Thauer R.K."/>
            <person name="Gottschalk G."/>
        </authorList>
    </citation>
    <scope>NUCLEOTIDE SEQUENCE [LARGE SCALE GENOMIC DNA]</scope>
    <source>
        <strain>ATCC 8527 / DSM 555 / NBRC 12016 / NCIMB 10680 / K1</strain>
    </source>
</reference>
<organism>
    <name type="scientific">Clostridium kluyveri (strain ATCC 8527 / DSM 555 / NBRC 12016 / NCIMB 10680 / K1)</name>
    <dbReference type="NCBI Taxonomy" id="431943"/>
    <lineage>
        <taxon>Bacteria</taxon>
        <taxon>Bacillati</taxon>
        <taxon>Bacillota</taxon>
        <taxon>Clostridia</taxon>
        <taxon>Eubacteriales</taxon>
        <taxon>Clostridiaceae</taxon>
        <taxon>Clostridium</taxon>
    </lineage>
</organism>
<accession>A5N3B2</accession>